<organismHost>
    <name type="scientific">Aves</name>
    <dbReference type="NCBI Taxonomy" id="8782"/>
</organismHost>
<organismHost>
    <name type="scientific">Cetacea</name>
    <name type="common">whales</name>
    <dbReference type="NCBI Taxonomy" id="9721"/>
</organismHost>
<organismHost>
    <name type="scientific">Homo sapiens</name>
    <name type="common">Human</name>
    <dbReference type="NCBI Taxonomy" id="9606"/>
</organismHost>
<organismHost>
    <name type="scientific">Phocidae</name>
    <name type="common">true seals</name>
    <dbReference type="NCBI Taxonomy" id="9709"/>
</organismHost>
<organismHost>
    <name type="scientific">Sus scrofa</name>
    <name type="common">Pig</name>
    <dbReference type="NCBI Taxonomy" id="9823"/>
</organismHost>
<evidence type="ECO:0000255" key="1">
    <source>
        <dbReference type="HAMAP-Rule" id="MF_04067"/>
    </source>
</evidence>
<proteinExistence type="inferred from homology"/>
<dbReference type="EMBL" id="M25375">
    <property type="protein sequence ID" value="AAA43544.1"/>
    <property type="molecule type" value="Genomic_RNA"/>
</dbReference>
<dbReference type="PIR" id="F32662">
    <property type="entry name" value="MNIVB3"/>
</dbReference>
<dbReference type="SMR" id="P13147"/>
<dbReference type="GO" id="GO:0042025">
    <property type="term" value="C:host cell nucleus"/>
    <property type="evidence" value="ECO:0007669"/>
    <property type="project" value="UniProtKB-SubCell"/>
</dbReference>
<dbReference type="GO" id="GO:0044423">
    <property type="term" value="C:virion component"/>
    <property type="evidence" value="ECO:0007669"/>
    <property type="project" value="UniProtKB-UniRule"/>
</dbReference>
<dbReference type="GO" id="GO:0039675">
    <property type="term" value="P:exit of virus from host cell nucleus through nuclear pore"/>
    <property type="evidence" value="ECO:0007669"/>
    <property type="project" value="UniProtKB-UniRule"/>
</dbReference>
<dbReference type="Gene3D" id="1.10.287.230">
    <property type="match status" value="1"/>
</dbReference>
<dbReference type="Gene3D" id="1.10.287.10">
    <property type="entry name" value="S15/NS1, RNA-binding"/>
    <property type="match status" value="1"/>
</dbReference>
<dbReference type="HAMAP" id="MF_04067">
    <property type="entry name" value="INFV_NEP"/>
    <property type="match status" value="1"/>
</dbReference>
<dbReference type="InterPro" id="IPR000968">
    <property type="entry name" value="Flu_NS2"/>
</dbReference>
<dbReference type="Pfam" id="PF00601">
    <property type="entry name" value="Flu_NS2"/>
    <property type="match status" value="1"/>
</dbReference>
<dbReference type="SUPFAM" id="SSF101156">
    <property type="entry name" value="Nonstructural protein ns2, Nep, M1-binding domain"/>
    <property type="match status" value="1"/>
</dbReference>
<sequence length="121" mass="14306">MDSNTVSSFQDILMRMSKMQLGSSSEDLNGMITQFESLKLYRDSLGEAVMRVGDLHSLQSRNGKWREQLSQKFEEIRWLIEEVRHRLKITENSFEQITFMQALQLLLEVEQEIRTFSFQLI</sequence>
<feature type="chain" id="PRO_0000078999" description="Nuclear export protein">
    <location>
        <begin position="1"/>
        <end position="121"/>
    </location>
</feature>
<feature type="short sequence motif" description="Nuclear export signal" evidence="1">
    <location>
        <begin position="12"/>
        <end position="21"/>
    </location>
</feature>
<feature type="short sequence motif" description="Nuclear export signal" evidence="1">
    <location>
        <begin position="85"/>
        <end position="94"/>
    </location>
</feature>
<organism>
    <name type="scientific">Influenza A virus (strain A/Mallard/New York/6874/1978 H3N2)</name>
    <dbReference type="NCBI Taxonomy" id="384518"/>
    <lineage>
        <taxon>Viruses</taxon>
        <taxon>Riboviria</taxon>
        <taxon>Orthornavirae</taxon>
        <taxon>Negarnaviricota</taxon>
        <taxon>Polyploviricotina</taxon>
        <taxon>Insthoviricetes</taxon>
        <taxon>Articulavirales</taxon>
        <taxon>Orthomyxoviridae</taxon>
        <taxon>Alphainfluenzavirus</taxon>
        <taxon>Alphainfluenzavirus influenzae</taxon>
        <taxon>Influenza A virus</taxon>
    </lineage>
</organism>
<keyword id="KW-0025">Alternative splicing</keyword>
<keyword id="KW-1048">Host nucleus</keyword>
<keyword id="KW-0945">Host-virus interaction</keyword>
<keyword id="KW-0813">Transport</keyword>
<keyword id="KW-0946">Virion</keyword>
<name>NEP_I78A4</name>
<accession>P13147</accession>
<gene>
    <name evidence="1" type="primary">NS</name>
</gene>
<protein>
    <recommendedName>
        <fullName evidence="1">Nuclear export protein</fullName>
        <shortName evidence="1">NEP</shortName>
    </recommendedName>
    <alternativeName>
        <fullName evidence="1">Non-structural protein 2</fullName>
        <shortName evidence="1">NS2</shortName>
    </alternativeName>
</protein>
<comment type="function">
    <text evidence="1">Mediates the nuclear export of encapsidated genomic RNAs (ribonucleoproteins, RNPs). Acts as an adapter between viral RNPs complexes and the nuclear export machinery of the cell. Possesses no intrinsic RNA-binding activity, but includes a C-terminal M1-binding domain. This domain is believed to allow recognition of RNPs bound to the protein M1. Since protein M1 is not available in large quantities before late stages of infection, such an indirect recognition mechanism probably ensures that genomic RNPs are not exported from the host nucleus until sufficient quantities of viral mRNA and progeny genomic RNA have been synthesized. Furthermore, the RNPs enter the host cytoplasm only when associated with the M1 protein that is necessary to guide them to the plasma membrane. May down-regulate viral RNA synthesis when overproduced.</text>
</comment>
<comment type="subunit">
    <text evidence="1">Interacts with protein M1. May interact with host nucleoporin RAB/HRB and exportin XPO1/CRM1.</text>
</comment>
<comment type="subcellular location">
    <subcellularLocation>
        <location evidence="1">Virion</location>
    </subcellularLocation>
    <subcellularLocation>
        <location evidence="1">Host nucleus</location>
    </subcellularLocation>
</comment>
<comment type="alternative products">
    <event type="alternative splicing"/>
    <isoform>
        <id>P13147-1</id>
        <name>NEP</name>
        <name>NS2</name>
        <sequence type="displayed"/>
    </isoform>
    <isoform>
        <id>P13139-1</id>
        <name>NS1</name>
        <sequence type="external"/>
    </isoform>
</comment>
<comment type="miscellaneous">
    <text>Average number present in a viral particle is estimated to be 130-200 molecules.</text>
</comment>
<comment type="similarity">
    <text evidence="1">Belongs to the influenza viruses NEP family.</text>
</comment>
<reference key="1">
    <citation type="journal article" date="1989" name="Virology">
        <title>The B allele of the NS gene of avian influenza viruses, but not the A allele, attenuates a human influenza A virus for squirrel monkeys.</title>
        <authorList>
            <person name="Treanor J.J."/>
            <person name="Snyder M.H."/>
            <person name="London W.T."/>
            <person name="Murphy B.R."/>
        </authorList>
    </citation>
    <scope>NUCLEOTIDE SEQUENCE [GENOMIC RNA]</scope>
</reference>